<gene>
    <name evidence="1" type="primary">rplB</name>
    <name type="ordered locus">RPE_3583</name>
</gene>
<keyword id="KW-0687">Ribonucleoprotein</keyword>
<keyword id="KW-0689">Ribosomal protein</keyword>
<keyword id="KW-0694">RNA-binding</keyword>
<keyword id="KW-0699">rRNA-binding</keyword>
<comment type="function">
    <text evidence="1">One of the primary rRNA binding proteins. Required for association of the 30S and 50S subunits to form the 70S ribosome, for tRNA binding and peptide bond formation. It has been suggested to have peptidyltransferase activity; this is somewhat controversial. Makes several contacts with the 16S rRNA in the 70S ribosome.</text>
</comment>
<comment type="subunit">
    <text evidence="1">Part of the 50S ribosomal subunit. Forms a bridge to the 30S subunit in the 70S ribosome.</text>
</comment>
<comment type="similarity">
    <text evidence="1">Belongs to the universal ribosomal protein uL2 family.</text>
</comment>
<name>RL2_RHOP5</name>
<proteinExistence type="inferred from homology"/>
<reference key="1">
    <citation type="submission" date="2006-09" db="EMBL/GenBank/DDBJ databases">
        <title>Complete sequence of Rhodopseudomonas palustris BisA53.</title>
        <authorList>
            <consortium name="US DOE Joint Genome Institute"/>
            <person name="Copeland A."/>
            <person name="Lucas S."/>
            <person name="Lapidus A."/>
            <person name="Barry K."/>
            <person name="Detter J.C."/>
            <person name="Glavina del Rio T."/>
            <person name="Hammon N."/>
            <person name="Israni S."/>
            <person name="Dalin E."/>
            <person name="Tice H."/>
            <person name="Pitluck S."/>
            <person name="Chain P."/>
            <person name="Malfatti S."/>
            <person name="Shin M."/>
            <person name="Vergez L."/>
            <person name="Schmutz J."/>
            <person name="Larimer F."/>
            <person name="Land M."/>
            <person name="Hauser L."/>
            <person name="Pelletier D.A."/>
            <person name="Kyrpides N."/>
            <person name="Kim E."/>
            <person name="Harwood C.S."/>
            <person name="Oda Y."/>
            <person name="Richardson P."/>
        </authorList>
    </citation>
    <scope>NUCLEOTIDE SEQUENCE [LARGE SCALE GENOMIC DNA]</scope>
    <source>
        <strain>BisA53</strain>
    </source>
</reference>
<accession>Q07KM1</accession>
<organism>
    <name type="scientific">Rhodopseudomonas palustris (strain BisA53)</name>
    <dbReference type="NCBI Taxonomy" id="316055"/>
    <lineage>
        <taxon>Bacteria</taxon>
        <taxon>Pseudomonadati</taxon>
        <taxon>Pseudomonadota</taxon>
        <taxon>Alphaproteobacteria</taxon>
        <taxon>Hyphomicrobiales</taxon>
        <taxon>Nitrobacteraceae</taxon>
        <taxon>Rhodopseudomonas</taxon>
    </lineage>
</organism>
<sequence length="277" mass="30503">MALKKYNPTTPGQRQLVMVDRSALYKGKPVKVLTEGKHSNGGRNNTGRITVRFRGGGHKKTYRIVDFKRTKVDVPAKVERLEYDPNRTAFIALIKYADGEQAYILAPQRLAVGDTVIAGAYVDVKPGNVMPLGNMPIGTIVHNVEMKIGKGGQIARSAGTYAQLVGRDHDYVIVRLNSGEQRLIHGRCTATIGAVSNPDHMNISIGKAGRTRWLGWRPHNRGVVMNPIDHPHGGGEGRTSGGRHPVTPWGKPTKGKKTRSNKSTNKFILISRHKRKK</sequence>
<protein>
    <recommendedName>
        <fullName evidence="1">Large ribosomal subunit protein uL2</fullName>
    </recommendedName>
    <alternativeName>
        <fullName evidence="3">50S ribosomal protein L2</fullName>
    </alternativeName>
</protein>
<dbReference type="EMBL" id="CP000463">
    <property type="protein sequence ID" value="ABJ07513.1"/>
    <property type="molecule type" value="Genomic_DNA"/>
</dbReference>
<dbReference type="SMR" id="Q07KM1"/>
<dbReference type="STRING" id="316055.RPE_3583"/>
<dbReference type="KEGG" id="rpe:RPE_3583"/>
<dbReference type="eggNOG" id="COG0090">
    <property type="taxonomic scope" value="Bacteria"/>
</dbReference>
<dbReference type="HOGENOM" id="CLU_036235_2_1_5"/>
<dbReference type="OrthoDB" id="9778722at2"/>
<dbReference type="GO" id="GO:0015934">
    <property type="term" value="C:large ribosomal subunit"/>
    <property type="evidence" value="ECO:0007669"/>
    <property type="project" value="InterPro"/>
</dbReference>
<dbReference type="GO" id="GO:0019843">
    <property type="term" value="F:rRNA binding"/>
    <property type="evidence" value="ECO:0007669"/>
    <property type="project" value="UniProtKB-UniRule"/>
</dbReference>
<dbReference type="GO" id="GO:0003735">
    <property type="term" value="F:structural constituent of ribosome"/>
    <property type="evidence" value="ECO:0007669"/>
    <property type="project" value="InterPro"/>
</dbReference>
<dbReference type="GO" id="GO:0016740">
    <property type="term" value="F:transferase activity"/>
    <property type="evidence" value="ECO:0007669"/>
    <property type="project" value="InterPro"/>
</dbReference>
<dbReference type="GO" id="GO:0002181">
    <property type="term" value="P:cytoplasmic translation"/>
    <property type="evidence" value="ECO:0007669"/>
    <property type="project" value="TreeGrafter"/>
</dbReference>
<dbReference type="FunFam" id="2.30.30.30:FF:000055">
    <property type="entry name" value="50S ribosomal protein L2"/>
    <property type="match status" value="1"/>
</dbReference>
<dbReference type="FunFam" id="2.40.50.140:FF:000003">
    <property type="entry name" value="50S ribosomal protein L2"/>
    <property type="match status" value="1"/>
</dbReference>
<dbReference type="FunFam" id="4.10.950.10:FF:000001">
    <property type="entry name" value="50S ribosomal protein L2"/>
    <property type="match status" value="1"/>
</dbReference>
<dbReference type="Gene3D" id="2.30.30.30">
    <property type="match status" value="1"/>
</dbReference>
<dbReference type="Gene3D" id="2.40.50.140">
    <property type="entry name" value="Nucleic acid-binding proteins"/>
    <property type="match status" value="1"/>
</dbReference>
<dbReference type="Gene3D" id="4.10.950.10">
    <property type="entry name" value="Ribosomal protein L2, domain 3"/>
    <property type="match status" value="1"/>
</dbReference>
<dbReference type="HAMAP" id="MF_01320_B">
    <property type="entry name" value="Ribosomal_uL2_B"/>
    <property type="match status" value="1"/>
</dbReference>
<dbReference type="InterPro" id="IPR012340">
    <property type="entry name" value="NA-bd_OB-fold"/>
</dbReference>
<dbReference type="InterPro" id="IPR014722">
    <property type="entry name" value="Rib_uL2_dom2"/>
</dbReference>
<dbReference type="InterPro" id="IPR002171">
    <property type="entry name" value="Ribosomal_uL2"/>
</dbReference>
<dbReference type="InterPro" id="IPR005880">
    <property type="entry name" value="Ribosomal_uL2_bac/org-type"/>
</dbReference>
<dbReference type="InterPro" id="IPR022669">
    <property type="entry name" value="Ribosomal_uL2_C"/>
</dbReference>
<dbReference type="InterPro" id="IPR022671">
    <property type="entry name" value="Ribosomal_uL2_CS"/>
</dbReference>
<dbReference type="InterPro" id="IPR014726">
    <property type="entry name" value="Ribosomal_uL2_dom3"/>
</dbReference>
<dbReference type="InterPro" id="IPR022666">
    <property type="entry name" value="Ribosomal_uL2_RNA-bd_dom"/>
</dbReference>
<dbReference type="InterPro" id="IPR008991">
    <property type="entry name" value="Translation_prot_SH3-like_sf"/>
</dbReference>
<dbReference type="NCBIfam" id="TIGR01171">
    <property type="entry name" value="rplB_bact"/>
    <property type="match status" value="1"/>
</dbReference>
<dbReference type="PANTHER" id="PTHR13691:SF5">
    <property type="entry name" value="LARGE RIBOSOMAL SUBUNIT PROTEIN UL2M"/>
    <property type="match status" value="1"/>
</dbReference>
<dbReference type="PANTHER" id="PTHR13691">
    <property type="entry name" value="RIBOSOMAL PROTEIN L2"/>
    <property type="match status" value="1"/>
</dbReference>
<dbReference type="Pfam" id="PF00181">
    <property type="entry name" value="Ribosomal_L2"/>
    <property type="match status" value="1"/>
</dbReference>
<dbReference type="Pfam" id="PF03947">
    <property type="entry name" value="Ribosomal_L2_C"/>
    <property type="match status" value="1"/>
</dbReference>
<dbReference type="PIRSF" id="PIRSF002158">
    <property type="entry name" value="Ribosomal_L2"/>
    <property type="match status" value="1"/>
</dbReference>
<dbReference type="SMART" id="SM01383">
    <property type="entry name" value="Ribosomal_L2"/>
    <property type="match status" value="1"/>
</dbReference>
<dbReference type="SMART" id="SM01382">
    <property type="entry name" value="Ribosomal_L2_C"/>
    <property type="match status" value="1"/>
</dbReference>
<dbReference type="SUPFAM" id="SSF50249">
    <property type="entry name" value="Nucleic acid-binding proteins"/>
    <property type="match status" value="1"/>
</dbReference>
<dbReference type="SUPFAM" id="SSF50104">
    <property type="entry name" value="Translation proteins SH3-like domain"/>
    <property type="match status" value="1"/>
</dbReference>
<dbReference type="PROSITE" id="PS00467">
    <property type="entry name" value="RIBOSOMAL_L2"/>
    <property type="match status" value="1"/>
</dbReference>
<evidence type="ECO:0000255" key="1">
    <source>
        <dbReference type="HAMAP-Rule" id="MF_01320"/>
    </source>
</evidence>
<evidence type="ECO:0000256" key="2">
    <source>
        <dbReference type="SAM" id="MobiDB-lite"/>
    </source>
</evidence>
<evidence type="ECO:0000305" key="3"/>
<feature type="chain" id="PRO_0000309999" description="Large ribosomal subunit protein uL2">
    <location>
        <begin position="1"/>
        <end position="277"/>
    </location>
</feature>
<feature type="region of interest" description="Disordered" evidence="2">
    <location>
        <begin position="226"/>
        <end position="277"/>
    </location>
</feature>